<feature type="initiator methionine" description="Removed" evidence="2">
    <location>
        <position position="1"/>
    </location>
</feature>
<feature type="chain" id="PRO_0000197127" description="Telomeric repeat-binding factor 2-interacting protein 1">
    <location>
        <begin position="2"/>
        <end position="393"/>
    </location>
</feature>
<feature type="domain" description="BRCT">
    <location>
        <begin position="78"/>
        <end position="101"/>
    </location>
</feature>
<feature type="domain" description="Myb-like">
    <location>
        <begin position="125"/>
        <end position="185"/>
    </location>
</feature>
<feature type="region of interest" description="Disordered" evidence="4">
    <location>
        <begin position="104"/>
        <end position="132"/>
    </location>
</feature>
<feature type="region of interest" description="Disordered" evidence="4">
    <location>
        <begin position="193"/>
        <end position="304"/>
    </location>
</feature>
<feature type="short sequence motif" description="Nuclear localization signal" evidence="3">
    <location>
        <begin position="377"/>
        <end position="393"/>
    </location>
</feature>
<feature type="compositionally biased region" description="Basic and acidic residues" evidence="4">
    <location>
        <begin position="223"/>
        <end position="252"/>
    </location>
</feature>
<feature type="compositionally biased region" description="Acidic residues" evidence="4">
    <location>
        <begin position="282"/>
        <end position="297"/>
    </location>
</feature>
<feature type="modified residue" description="N-acetylalanine" evidence="2">
    <location>
        <position position="2"/>
    </location>
</feature>
<feature type="modified residue" description="Phosphoserine" evidence="2">
    <location>
        <position position="36"/>
    </location>
</feature>
<feature type="modified residue" description="Phosphoserine" evidence="2">
    <location>
        <position position="43"/>
    </location>
</feature>
<feature type="modified residue" description="Phosphoserine" evidence="10">
    <location>
        <position position="151"/>
    </location>
</feature>
<feature type="modified residue" description="Phosphoserine" evidence="2">
    <location>
        <position position="153"/>
    </location>
</feature>
<feature type="modified residue" description="Phosphoserine" evidence="10">
    <location>
        <position position="200"/>
    </location>
</feature>
<feature type="modified residue" description="Phosphoserine" evidence="2">
    <location>
        <position position="203"/>
    </location>
</feature>
<feature type="cross-link" description="Glycyl lysine isopeptide (Lys-Gly) (interchain with G-Cter in SUMO2)" evidence="2">
    <location>
        <position position="111"/>
    </location>
</feature>
<feature type="cross-link" description="Glycyl lysine isopeptide (Lys-Gly) (interchain with G-Cter in SUMO2)" evidence="2">
    <location>
        <position position="191"/>
    </location>
</feature>
<feature type="cross-link" description="Glycyl lysine isopeptide (Lys-Gly) (interchain with G-Cter in SUMO2)" evidence="2">
    <location>
        <position position="205"/>
    </location>
</feature>
<feature type="cross-link" description="Glycyl lysine isopeptide (Lys-Gly) (interchain with G-Cter in SUMO2)" evidence="2">
    <location>
        <position position="209"/>
    </location>
</feature>
<feature type="cross-link" description="Glycyl lysine isopeptide (Lys-Gly) (interchain with G-Cter in SUMO2)" evidence="2">
    <location>
        <position position="237"/>
    </location>
</feature>
<feature type="cross-link" description="Glycyl lysine isopeptide (Lys-Gly) (interchain with G-Cter in SUMO2)" evidence="2">
    <location>
        <position position="366"/>
    </location>
</feature>
<feature type="sequence conflict" description="In Ref. 4; BAA95042/BAA95043." evidence="8" ref="4">
    <original>PTPEED</original>
    <variation>HTHTQS</variation>
    <location>
        <begin position="281"/>
        <end position="286"/>
    </location>
</feature>
<gene>
    <name type="primary">Terf2ip</name>
    <name type="synonym">Rap1</name>
    <name type="ORF">MNCb-0448</name>
    <name type="ORF">MNCb-0628</name>
</gene>
<accession>Q91VL8</accession>
<accession>D3YWE8</accession>
<accession>Q543F4</accession>
<accession>Q8C2Y1</accession>
<accession>Q9JJE8</accession>
<accession>Q9JJE9</accession>
<keyword id="KW-0007">Acetylation</keyword>
<keyword id="KW-0010">Activator</keyword>
<keyword id="KW-0158">Chromosome</keyword>
<keyword id="KW-0963">Cytoplasm</keyword>
<keyword id="KW-1017">Isopeptide bond</keyword>
<keyword id="KW-0539">Nucleus</keyword>
<keyword id="KW-0597">Phosphoprotein</keyword>
<keyword id="KW-1185">Reference proteome</keyword>
<keyword id="KW-0779">Telomere</keyword>
<keyword id="KW-0804">Transcription</keyword>
<keyword id="KW-0805">Transcription regulation</keyword>
<keyword id="KW-0832">Ubl conjugation</keyword>
<sequence length="393" mass="43353">MAEAMDLGKDPNGPTHSSTLFVREDGSAMSFYVRPSSAKRRLSTLILHGGGTVCRVQEPGAVLLAQPGEALAEASGDFISTQYILDCVDRNEKLDLEAYRLGLTEQASDPKPGASTEGSTEPEPQPLTGRIAYTDAEDVAILTYVKENARSPSSVTGNALWKAMEKSSLTQHSWQSLKDRYLKHLRGQEHKYLLGNAPVSPSSQKLKRKAEQDPEAADSGEPQNKRAPDLPEEECVKGEIKENGEADNKLFEEAAPEFGEAVVDESPDFEIHITMCDGDPPTPEEDSETQPDEEEEEPKVSTQEVGTAIKVIRQLMEKFNLDLSTVTQALLKNSGELEATSSFLESGRRPDGYPIWCRQDDLDLQKDDDDTKNALVKKFGAQNVARRIEFRKK</sequence>
<comment type="function">
    <text evidence="5 6 7">Acts both as a regulator of telomere function and as a transcription regulator. Involved in the regulation of telomere length and protection as a component of the shelterin complex (telosome). In contrast to other components of the shelterin complex, it is dispensible for telomere capping and does not participate in the protection of telomeres against non-homologous end-joining (NHEJ)-mediated repair. Instead, it is required to negatively regulate telomere recombination and is essential for repressing homology-directed repair (HDR), which can affect telomere length. Does not bind DNA directly: recruited to telomeric double-stranded 5'-TTAGGG-3' repeats via its interaction with TERF2. Independently of its function in telomeres, also acts as a transcription regulator: recruited to extratelomeric 5'-TTAGGG-3' sites via its association with TERF2 or other factors, and regulates gene expression. When cytoplasmic, associates with the I-kappa-B-kinase (IKK) complex and acts as a regulator of the NF-kappa-B signaling by promoting IKK-mediated phosphorylation of RELA/p65, leading to activate expression of NF-kappa-B target genes.</text>
</comment>
<comment type="subunit">
    <text evidence="1 5 7">Homodimer. Component of the shelterin complex (telosome) composed of TERF1, TERF2, TINF2, TERF2IP ACD and POT1. Binds to TERF2 (but not TERF1) with its C-terminus. Interacts with SLX4/BTBD12 (By similarity). Interacts with TERF2; the interaction is direct. Does not interact with TERF1. Associates with the I-kappa-B-kinase (IKK) core complex, composed of CHUK, IKBKB and IKBKG.</text>
</comment>
<comment type="subcellular location">
    <subcellularLocation>
        <location evidence="7">Nucleus</location>
    </subcellularLocation>
    <subcellularLocation>
        <location evidence="7">Cytoplasm</location>
    </subcellularLocation>
    <subcellularLocation>
        <location evidence="6">Chromosome</location>
    </subcellularLocation>
    <subcellularLocation>
        <location evidence="6">Chromosome</location>
        <location evidence="6">Telomere</location>
    </subcellularLocation>
    <text evidence="6 7">Associates with chromosomes, both at telomeres and in extratelomeric sites (PubMed:20622869). Also exists as a cytoplasmic form, where it associates with the IKK complex (PubMed:20622870).</text>
</comment>
<comment type="disruption phenotype">
    <text evidence="5 6">Mice are viable and fertile. No major telomere dysfunction such as telomere fusions are observed. An increased telomere fragility and recombination due to defects in HDR are however present. Mice with conditional deletion in stratified epithelia display shorter telomeres and developed skin hyperpigmentation in adulthood.</text>
</comment>
<comment type="miscellaneous">
    <text evidence="9">Shares a bidirectional promoter with KARS1 (PubMed:14659874). This shared promoter with an essential gene complicated the task when generating knockout mice; the problem was overcome by generating conditional knockout strategies (PubMed:20339076, PubMed:20622869).</text>
</comment>
<comment type="similarity">
    <text evidence="8">Belongs to the RAP1 family.</text>
</comment>
<comment type="sequence caution" evidence="8">
    <conflict type="erroneous initiation">
        <sequence resource="EMBL-CDS" id="BAA95043"/>
    </conflict>
    <text>Truncated N-terminus.</text>
</comment>
<reference key="1">
    <citation type="journal article" date="2005" name="Science">
        <title>The transcriptional landscape of the mammalian genome.</title>
        <authorList>
            <person name="Carninci P."/>
            <person name="Kasukawa T."/>
            <person name="Katayama S."/>
            <person name="Gough J."/>
            <person name="Frith M.C."/>
            <person name="Maeda N."/>
            <person name="Oyama R."/>
            <person name="Ravasi T."/>
            <person name="Lenhard B."/>
            <person name="Wells C."/>
            <person name="Kodzius R."/>
            <person name="Shimokawa K."/>
            <person name="Bajic V.B."/>
            <person name="Brenner S.E."/>
            <person name="Batalov S."/>
            <person name="Forrest A.R."/>
            <person name="Zavolan M."/>
            <person name="Davis M.J."/>
            <person name="Wilming L.G."/>
            <person name="Aidinis V."/>
            <person name="Allen J.E."/>
            <person name="Ambesi-Impiombato A."/>
            <person name="Apweiler R."/>
            <person name="Aturaliya R.N."/>
            <person name="Bailey T.L."/>
            <person name="Bansal M."/>
            <person name="Baxter L."/>
            <person name="Beisel K.W."/>
            <person name="Bersano T."/>
            <person name="Bono H."/>
            <person name="Chalk A.M."/>
            <person name="Chiu K.P."/>
            <person name="Choudhary V."/>
            <person name="Christoffels A."/>
            <person name="Clutterbuck D.R."/>
            <person name="Crowe M.L."/>
            <person name="Dalla E."/>
            <person name="Dalrymple B.P."/>
            <person name="de Bono B."/>
            <person name="Della Gatta G."/>
            <person name="di Bernardo D."/>
            <person name="Down T."/>
            <person name="Engstrom P."/>
            <person name="Fagiolini M."/>
            <person name="Faulkner G."/>
            <person name="Fletcher C.F."/>
            <person name="Fukushima T."/>
            <person name="Furuno M."/>
            <person name="Futaki S."/>
            <person name="Gariboldi M."/>
            <person name="Georgii-Hemming P."/>
            <person name="Gingeras T.R."/>
            <person name="Gojobori T."/>
            <person name="Green R.E."/>
            <person name="Gustincich S."/>
            <person name="Harbers M."/>
            <person name="Hayashi Y."/>
            <person name="Hensch T.K."/>
            <person name="Hirokawa N."/>
            <person name="Hill D."/>
            <person name="Huminiecki L."/>
            <person name="Iacono M."/>
            <person name="Ikeo K."/>
            <person name="Iwama A."/>
            <person name="Ishikawa T."/>
            <person name="Jakt M."/>
            <person name="Kanapin A."/>
            <person name="Katoh M."/>
            <person name="Kawasawa Y."/>
            <person name="Kelso J."/>
            <person name="Kitamura H."/>
            <person name="Kitano H."/>
            <person name="Kollias G."/>
            <person name="Krishnan S.P."/>
            <person name="Kruger A."/>
            <person name="Kummerfeld S.K."/>
            <person name="Kurochkin I.V."/>
            <person name="Lareau L.F."/>
            <person name="Lazarevic D."/>
            <person name="Lipovich L."/>
            <person name="Liu J."/>
            <person name="Liuni S."/>
            <person name="McWilliam S."/>
            <person name="Madan Babu M."/>
            <person name="Madera M."/>
            <person name="Marchionni L."/>
            <person name="Matsuda H."/>
            <person name="Matsuzawa S."/>
            <person name="Miki H."/>
            <person name="Mignone F."/>
            <person name="Miyake S."/>
            <person name="Morris K."/>
            <person name="Mottagui-Tabar S."/>
            <person name="Mulder N."/>
            <person name="Nakano N."/>
            <person name="Nakauchi H."/>
            <person name="Ng P."/>
            <person name="Nilsson R."/>
            <person name="Nishiguchi S."/>
            <person name="Nishikawa S."/>
            <person name="Nori F."/>
            <person name="Ohara O."/>
            <person name="Okazaki Y."/>
            <person name="Orlando V."/>
            <person name="Pang K.C."/>
            <person name="Pavan W.J."/>
            <person name="Pavesi G."/>
            <person name="Pesole G."/>
            <person name="Petrovsky N."/>
            <person name="Piazza S."/>
            <person name="Reed J."/>
            <person name="Reid J.F."/>
            <person name="Ring B.Z."/>
            <person name="Ringwald M."/>
            <person name="Rost B."/>
            <person name="Ruan Y."/>
            <person name="Salzberg S.L."/>
            <person name="Sandelin A."/>
            <person name="Schneider C."/>
            <person name="Schoenbach C."/>
            <person name="Sekiguchi K."/>
            <person name="Semple C.A."/>
            <person name="Seno S."/>
            <person name="Sessa L."/>
            <person name="Sheng Y."/>
            <person name="Shibata Y."/>
            <person name="Shimada H."/>
            <person name="Shimada K."/>
            <person name="Silva D."/>
            <person name="Sinclair B."/>
            <person name="Sperling S."/>
            <person name="Stupka E."/>
            <person name="Sugiura K."/>
            <person name="Sultana R."/>
            <person name="Takenaka Y."/>
            <person name="Taki K."/>
            <person name="Tammoja K."/>
            <person name="Tan S.L."/>
            <person name="Tang S."/>
            <person name="Taylor M.S."/>
            <person name="Tegner J."/>
            <person name="Teichmann S.A."/>
            <person name="Ueda H.R."/>
            <person name="van Nimwegen E."/>
            <person name="Verardo R."/>
            <person name="Wei C.L."/>
            <person name="Yagi K."/>
            <person name="Yamanishi H."/>
            <person name="Zabarovsky E."/>
            <person name="Zhu S."/>
            <person name="Zimmer A."/>
            <person name="Hide W."/>
            <person name="Bult C."/>
            <person name="Grimmond S.M."/>
            <person name="Teasdale R.D."/>
            <person name="Liu E.T."/>
            <person name="Brusic V."/>
            <person name="Quackenbush J."/>
            <person name="Wahlestedt C."/>
            <person name="Mattick J.S."/>
            <person name="Hume D.A."/>
            <person name="Kai C."/>
            <person name="Sasaki D."/>
            <person name="Tomaru Y."/>
            <person name="Fukuda S."/>
            <person name="Kanamori-Katayama M."/>
            <person name="Suzuki M."/>
            <person name="Aoki J."/>
            <person name="Arakawa T."/>
            <person name="Iida J."/>
            <person name="Imamura K."/>
            <person name="Itoh M."/>
            <person name="Kato T."/>
            <person name="Kawaji H."/>
            <person name="Kawagashira N."/>
            <person name="Kawashima T."/>
            <person name="Kojima M."/>
            <person name="Kondo S."/>
            <person name="Konno H."/>
            <person name="Nakano K."/>
            <person name="Ninomiya N."/>
            <person name="Nishio T."/>
            <person name="Okada M."/>
            <person name="Plessy C."/>
            <person name="Shibata K."/>
            <person name="Shiraki T."/>
            <person name="Suzuki S."/>
            <person name="Tagami M."/>
            <person name="Waki K."/>
            <person name="Watahiki A."/>
            <person name="Okamura-Oho Y."/>
            <person name="Suzuki H."/>
            <person name="Kawai J."/>
            <person name="Hayashizaki Y."/>
        </authorList>
    </citation>
    <scope>NUCLEOTIDE SEQUENCE [LARGE SCALE MRNA]</scope>
    <source>
        <strain>C57BL/6J</strain>
        <tissue>Eye</tissue>
        <tissue>Head</tissue>
        <tissue>Heart</tissue>
        <tissue>Ovary</tissue>
        <tissue>Oviduct</tissue>
        <tissue>Pancreas</tissue>
        <tissue>Testis</tissue>
        <tissue>Thymus</tissue>
    </source>
</reference>
<reference key="2">
    <citation type="journal article" date="2009" name="PLoS Biol.">
        <title>Lineage-specific biology revealed by a finished genome assembly of the mouse.</title>
        <authorList>
            <person name="Church D.M."/>
            <person name="Goodstadt L."/>
            <person name="Hillier L.W."/>
            <person name="Zody M.C."/>
            <person name="Goldstein S."/>
            <person name="She X."/>
            <person name="Bult C.J."/>
            <person name="Agarwala R."/>
            <person name="Cherry J.L."/>
            <person name="DiCuccio M."/>
            <person name="Hlavina W."/>
            <person name="Kapustin Y."/>
            <person name="Meric P."/>
            <person name="Maglott D."/>
            <person name="Birtle Z."/>
            <person name="Marques A.C."/>
            <person name="Graves T."/>
            <person name="Zhou S."/>
            <person name="Teague B."/>
            <person name="Potamousis K."/>
            <person name="Churas C."/>
            <person name="Place M."/>
            <person name="Herschleb J."/>
            <person name="Runnheim R."/>
            <person name="Forrest D."/>
            <person name="Amos-Landgraf J."/>
            <person name="Schwartz D.C."/>
            <person name="Cheng Z."/>
            <person name="Lindblad-Toh K."/>
            <person name="Eichler E.E."/>
            <person name="Ponting C.P."/>
        </authorList>
    </citation>
    <scope>NUCLEOTIDE SEQUENCE [LARGE SCALE GENOMIC DNA]</scope>
    <source>
        <strain>C57BL/6J</strain>
    </source>
</reference>
<reference key="3">
    <citation type="journal article" date="2004" name="Genome Res.">
        <title>The status, quality, and expansion of the NIH full-length cDNA project: the Mammalian Gene Collection (MGC).</title>
        <authorList>
            <consortium name="The MGC Project Team"/>
        </authorList>
    </citation>
    <scope>NUCLEOTIDE SEQUENCE [LARGE SCALE MRNA]</scope>
    <source>
        <tissue>Mammary tumor</tissue>
    </source>
</reference>
<reference key="4">
    <citation type="submission" date="2000-04" db="EMBL/GenBank/DDBJ databases">
        <title>Isolation of full-length cDNA clones from mouse brain cDNA library made by oligo-capping method.</title>
        <authorList>
            <person name="Osada N."/>
            <person name="Kusuda J."/>
            <person name="Tanuma R."/>
            <person name="Ito A."/>
            <person name="Hirata M."/>
            <person name="Sugano S."/>
            <person name="Hashimoto K."/>
        </authorList>
    </citation>
    <scope>NUCLEOTIDE SEQUENCE [LARGE SCALE MRNA] OF 1-286</scope>
    <source>
        <strain>C57BL/6J</strain>
        <tissue>Brain</tissue>
    </source>
</reference>
<reference key="5">
    <citation type="journal article" date="2003" name="Gene">
        <title>The telomeric protein Rap1 is conserved in vertebrates and is expressed from a bidirectional promoter positioned between the Rap1 and KARS genes.</title>
        <authorList>
            <person name="Tan M."/>
            <person name="Wei C."/>
            <person name="Price C.M."/>
        </authorList>
    </citation>
    <scope>BIDIRECTIONAL PROMOTER WITH KARS1</scope>
</reference>
<reference key="6">
    <citation type="journal article" date="2004" name="Mol. Cell. Proteomics">
        <title>Phosphoproteomic analysis of the developing mouse brain.</title>
        <authorList>
            <person name="Ballif B.A."/>
            <person name="Villen J."/>
            <person name="Beausoleil S.A."/>
            <person name="Schwartz D."/>
            <person name="Gygi S.P."/>
        </authorList>
    </citation>
    <scope>IDENTIFICATION BY MASS SPECTROMETRY [LARGE SCALE ANALYSIS]</scope>
    <source>
        <tissue>Embryonic brain</tissue>
    </source>
</reference>
<reference key="7">
    <citation type="journal article" date="2007" name="Proc. Natl. Acad. Sci. U.S.A.">
        <title>Large-scale phosphorylation analysis of mouse liver.</title>
        <authorList>
            <person name="Villen J."/>
            <person name="Beausoleil S.A."/>
            <person name="Gerber S.A."/>
            <person name="Gygi S.P."/>
        </authorList>
    </citation>
    <scope>IDENTIFICATION BY MASS SPECTROMETRY [LARGE SCALE ANALYSIS]</scope>
    <source>
        <tissue>Liver</tissue>
    </source>
</reference>
<reference key="8">
    <citation type="journal article" date="2010" name="Cell">
        <title>A tissue-specific atlas of mouse protein phosphorylation and expression.</title>
        <authorList>
            <person name="Huttlin E.L."/>
            <person name="Jedrychowski M.P."/>
            <person name="Elias J.E."/>
            <person name="Goswami T."/>
            <person name="Rad R."/>
            <person name="Beausoleil S.A."/>
            <person name="Villen J."/>
            <person name="Haas W."/>
            <person name="Sowa M.E."/>
            <person name="Gygi S.P."/>
        </authorList>
    </citation>
    <scope>PHOSPHORYLATION [LARGE SCALE ANALYSIS] AT SER-151 AND SER-200</scope>
    <scope>IDENTIFICATION BY MASS SPECTROMETRY [LARGE SCALE ANALYSIS]</scope>
    <source>
        <tissue>Lung</tissue>
        <tissue>Pancreas</tissue>
        <tissue>Spleen</tissue>
        <tissue>Testis</tissue>
    </source>
</reference>
<reference key="9">
    <citation type="journal article" date="2010" name="Nat. Cell Biol.">
        <title>Mammalian Rap1 controls telomere function and gene expression through binding to telomeric and extratelomeric sites.</title>
        <authorList>
            <person name="Martinez P."/>
            <person name="Thanasoula M."/>
            <person name="Carlos A.R."/>
            <person name="Gomez-Lopez G."/>
            <person name="Tejera A.M."/>
            <person name="Schoeftner S."/>
            <person name="Dominguez O."/>
            <person name="Pisano D.G."/>
            <person name="Tarsounas M."/>
            <person name="Blasco M.A."/>
        </authorList>
    </citation>
    <scope>FUNCTION</scope>
    <scope>SUBCELLULAR LOCATION</scope>
    <scope>DISRUPTION PHENOTYPE</scope>
</reference>
<reference key="10">
    <citation type="journal article" date="2010" name="Nat. Cell Biol.">
        <title>Telomere-independent Rap1 is an IKK adaptor and regulates NF-kappaB-dependent gene expression.</title>
        <authorList>
            <person name="Teo H."/>
            <person name="Ghosh S."/>
            <person name="Luesch H."/>
            <person name="Ghosh A."/>
            <person name="Wong E.T."/>
            <person name="Malik N."/>
            <person name="Orth A."/>
            <person name="de Jesus P."/>
            <person name="Perry A.S."/>
            <person name="Oliver J.D."/>
            <person name="Tran N.L."/>
            <person name="Speiser L.J."/>
            <person name="Wong M."/>
            <person name="Saez E."/>
            <person name="Schultz P."/>
            <person name="Chanda S.K."/>
            <person name="Verma I.M."/>
            <person name="Tergaonkar V."/>
        </authorList>
    </citation>
    <scope>FUNCTION IN NF-KAPPA-B PATHWAY</scope>
    <scope>SUBCELLULAR LOCATION</scope>
    <scope>INTERACTION WITH TERF2; CHUK; IKBKB AND IKBKG</scope>
</reference>
<reference key="11">
    <citation type="journal article" date="2010" name="Science">
        <title>Loss of Rap1 induces telomere recombination in the absence of NHEJ or a DNA damage signal.</title>
        <authorList>
            <person name="Sfeir A."/>
            <person name="Kabir S."/>
            <person name="van Overbeek M."/>
            <person name="Celli G.B."/>
            <person name="de Lange T."/>
        </authorList>
    </citation>
    <scope>FUNCTION</scope>
    <scope>SUBCELLULAR LOCATION</scope>
    <scope>DISRUPTION PHENOTYPE</scope>
    <scope>INTERACTION WITH TERF2</scope>
</reference>
<evidence type="ECO:0000250" key="1"/>
<evidence type="ECO:0000250" key="2">
    <source>
        <dbReference type="UniProtKB" id="Q9NYB0"/>
    </source>
</evidence>
<evidence type="ECO:0000255" key="3"/>
<evidence type="ECO:0000256" key="4">
    <source>
        <dbReference type="SAM" id="MobiDB-lite"/>
    </source>
</evidence>
<evidence type="ECO:0000269" key="5">
    <source>
    </source>
</evidence>
<evidence type="ECO:0000269" key="6">
    <source>
    </source>
</evidence>
<evidence type="ECO:0000269" key="7">
    <source>
    </source>
</evidence>
<evidence type="ECO:0000305" key="8"/>
<evidence type="ECO:0000305" key="9">
    <source>
    </source>
</evidence>
<evidence type="ECO:0007744" key="10">
    <source>
    </source>
</evidence>
<name>TE2IP_MOUSE</name>
<organism>
    <name type="scientific">Mus musculus</name>
    <name type="common">Mouse</name>
    <dbReference type="NCBI Taxonomy" id="10090"/>
    <lineage>
        <taxon>Eukaryota</taxon>
        <taxon>Metazoa</taxon>
        <taxon>Chordata</taxon>
        <taxon>Craniata</taxon>
        <taxon>Vertebrata</taxon>
        <taxon>Euteleostomi</taxon>
        <taxon>Mammalia</taxon>
        <taxon>Eutheria</taxon>
        <taxon>Euarchontoglires</taxon>
        <taxon>Glires</taxon>
        <taxon>Rodentia</taxon>
        <taxon>Myomorpha</taxon>
        <taxon>Muroidea</taxon>
        <taxon>Muridae</taxon>
        <taxon>Murinae</taxon>
        <taxon>Mus</taxon>
        <taxon>Mus</taxon>
    </lineage>
</organism>
<dbReference type="EMBL" id="AK041613">
    <property type="protein sequence ID" value="BAC31005.1"/>
    <property type="molecule type" value="mRNA"/>
</dbReference>
<dbReference type="EMBL" id="AK051818">
    <property type="protein sequence ID" value="BAC34781.1"/>
    <property type="molecule type" value="mRNA"/>
</dbReference>
<dbReference type="EMBL" id="AK081557">
    <property type="protein sequence ID" value="BAC38258.1"/>
    <property type="molecule type" value="mRNA"/>
</dbReference>
<dbReference type="EMBL" id="AK087729">
    <property type="protein sequence ID" value="BAC39985.1"/>
    <property type="molecule type" value="mRNA"/>
</dbReference>
<dbReference type="EMBL" id="AK084563">
    <property type="protein sequence ID" value="BAC39217.1"/>
    <property type="molecule type" value="mRNA"/>
</dbReference>
<dbReference type="EMBL" id="AK148508">
    <property type="protein sequence ID" value="BAE28592.1"/>
    <property type="molecule type" value="mRNA"/>
</dbReference>
<dbReference type="EMBL" id="AK148537">
    <property type="protein sequence ID" value="BAE28607.1"/>
    <property type="molecule type" value="mRNA"/>
</dbReference>
<dbReference type="EMBL" id="AK161452">
    <property type="protein sequence ID" value="BAE36404.1"/>
    <property type="molecule type" value="mRNA"/>
</dbReference>
<dbReference type="EMBL" id="AK165074">
    <property type="protein sequence ID" value="BAE38026.1"/>
    <property type="molecule type" value="mRNA"/>
</dbReference>
<dbReference type="EMBL" id="AC114648">
    <property type="status" value="NOT_ANNOTATED_CDS"/>
    <property type="molecule type" value="Genomic_DNA"/>
</dbReference>
<dbReference type="EMBL" id="BC012270">
    <property type="protein sequence ID" value="AAH12270.1"/>
    <property type="molecule type" value="mRNA"/>
</dbReference>
<dbReference type="EMBL" id="BC017641">
    <property type="protein sequence ID" value="AAH17641.1"/>
    <property type="molecule type" value="mRNA"/>
</dbReference>
<dbReference type="EMBL" id="AB041557">
    <property type="protein sequence ID" value="BAA95042.1"/>
    <property type="molecule type" value="mRNA"/>
</dbReference>
<dbReference type="EMBL" id="AB041559">
    <property type="protein sequence ID" value="BAA95043.1"/>
    <property type="status" value="ALT_INIT"/>
    <property type="molecule type" value="mRNA"/>
</dbReference>
<dbReference type="CCDS" id="CCDS52678.1"/>
<dbReference type="RefSeq" id="NP_065609.2">
    <property type="nucleotide sequence ID" value="NM_020584.2"/>
</dbReference>
<dbReference type="SMR" id="Q91VL8"/>
<dbReference type="BioGRID" id="208258">
    <property type="interactions" value="4"/>
</dbReference>
<dbReference type="ComplexPortal" id="CPX-153">
    <property type="entry name" value="Shelterin complex"/>
</dbReference>
<dbReference type="FunCoup" id="Q91VL8">
    <property type="interactions" value="3389"/>
</dbReference>
<dbReference type="IntAct" id="Q91VL8">
    <property type="interactions" value="1"/>
</dbReference>
<dbReference type="STRING" id="10090.ENSMUSP00000052170"/>
<dbReference type="GlyGen" id="Q91VL8">
    <property type="glycosylation" value="1 site"/>
</dbReference>
<dbReference type="iPTMnet" id="Q91VL8"/>
<dbReference type="PhosphoSitePlus" id="Q91VL8"/>
<dbReference type="jPOST" id="Q91VL8"/>
<dbReference type="PaxDb" id="10090-ENSMUSP00000052170"/>
<dbReference type="PeptideAtlas" id="Q91VL8"/>
<dbReference type="ProteomicsDB" id="263152"/>
<dbReference type="Pumba" id="Q91VL8"/>
<dbReference type="Antibodypedia" id="1877">
    <property type="antibodies" value="514 antibodies from 41 providers"/>
</dbReference>
<dbReference type="DNASU" id="57321"/>
<dbReference type="Ensembl" id="ENSMUST00000052138.11">
    <property type="protein sequence ID" value="ENSMUSP00000052170.9"/>
    <property type="gene ID" value="ENSMUSG00000033430.11"/>
</dbReference>
<dbReference type="GeneID" id="57321"/>
<dbReference type="KEGG" id="mmu:57321"/>
<dbReference type="UCSC" id="uc012gla.1">
    <property type="organism name" value="mouse"/>
</dbReference>
<dbReference type="AGR" id="MGI:1929871"/>
<dbReference type="CTD" id="54386"/>
<dbReference type="MGI" id="MGI:1929871">
    <property type="gene designation" value="Terf2ip"/>
</dbReference>
<dbReference type="VEuPathDB" id="HostDB:ENSMUSG00000033430"/>
<dbReference type="eggNOG" id="ENOG502RPXS">
    <property type="taxonomic scope" value="Eukaryota"/>
</dbReference>
<dbReference type="GeneTree" id="ENSGT00390000005351"/>
<dbReference type="HOGENOM" id="CLU_028192_0_0_1"/>
<dbReference type="InParanoid" id="Q91VL8"/>
<dbReference type="OMA" id="SDGYPIW"/>
<dbReference type="OrthoDB" id="435460at2759"/>
<dbReference type="PhylomeDB" id="Q91VL8"/>
<dbReference type="TreeFam" id="TF332348"/>
<dbReference type="BRENDA" id="3.6.5.2">
    <property type="organism ID" value="3474"/>
</dbReference>
<dbReference type="Reactome" id="R-MMU-110330">
    <property type="pathway name" value="Recognition and association of DNA glycosylase with site containing an affected purine"/>
</dbReference>
<dbReference type="Reactome" id="R-MMU-110331">
    <property type="pathway name" value="Cleavage of the damaged purine"/>
</dbReference>
<dbReference type="Reactome" id="R-MMU-171319">
    <property type="pathway name" value="Telomere Extension By Telomerase"/>
</dbReference>
<dbReference type="Reactome" id="R-MMU-174411">
    <property type="pathway name" value="Polymerase switching on the C-strand of the telomere"/>
</dbReference>
<dbReference type="Reactome" id="R-MMU-174414">
    <property type="pathway name" value="Processive synthesis on the C-strand of the telomere"/>
</dbReference>
<dbReference type="Reactome" id="R-MMU-174417">
    <property type="pathway name" value="Telomere C-strand (Lagging Strand) Synthesis"/>
</dbReference>
<dbReference type="Reactome" id="R-MMU-174430">
    <property type="pathway name" value="Telomere C-strand synthesis initiation"/>
</dbReference>
<dbReference type="Reactome" id="R-MMU-174437">
    <property type="pathway name" value="Removal of the Flap Intermediate from the C-strand"/>
</dbReference>
<dbReference type="Reactome" id="R-MMU-2559586">
    <property type="pathway name" value="DNA Damage/Telomere Stress Induced Senescence"/>
</dbReference>
<dbReference type="Reactome" id="R-MMU-9670095">
    <property type="pathway name" value="Inhibition of DNA recombination at telomere"/>
</dbReference>
<dbReference type="BioGRID-ORCS" id="57321">
    <property type="hits" value="7 hits in 112 CRISPR screens"/>
</dbReference>
<dbReference type="ChiTaRS" id="Terf2ip">
    <property type="organism name" value="mouse"/>
</dbReference>
<dbReference type="PRO" id="PR:Q91VL8"/>
<dbReference type="Proteomes" id="UP000000589">
    <property type="component" value="Chromosome 8"/>
</dbReference>
<dbReference type="RNAct" id="Q91VL8">
    <property type="molecule type" value="protein"/>
</dbReference>
<dbReference type="Bgee" id="ENSMUSG00000033430">
    <property type="expression patterns" value="Expressed in ventromedial nucleus of hypothalamus and 248 other cell types or tissues"/>
</dbReference>
<dbReference type="GO" id="GO:0000781">
    <property type="term" value="C:chromosome, telomeric region"/>
    <property type="evidence" value="ECO:0000314"/>
    <property type="project" value="UniProtKB"/>
</dbReference>
<dbReference type="GO" id="GO:0005737">
    <property type="term" value="C:cytoplasm"/>
    <property type="evidence" value="ECO:0000314"/>
    <property type="project" value="UniProtKB"/>
</dbReference>
<dbReference type="GO" id="GO:0001673">
    <property type="term" value="C:male germ cell nucleus"/>
    <property type="evidence" value="ECO:0000314"/>
    <property type="project" value="MGI"/>
</dbReference>
<dbReference type="GO" id="GO:0016604">
    <property type="term" value="C:nuclear body"/>
    <property type="evidence" value="ECO:0007669"/>
    <property type="project" value="Ensembl"/>
</dbReference>
<dbReference type="GO" id="GO:0005654">
    <property type="term" value="C:nucleoplasm"/>
    <property type="evidence" value="ECO:0000304"/>
    <property type="project" value="Reactome"/>
</dbReference>
<dbReference type="GO" id="GO:0005634">
    <property type="term" value="C:nucleus"/>
    <property type="evidence" value="ECO:0000314"/>
    <property type="project" value="UniProtKB"/>
</dbReference>
<dbReference type="GO" id="GO:0070187">
    <property type="term" value="C:shelterin complex"/>
    <property type="evidence" value="ECO:0000266"/>
    <property type="project" value="ComplexPortal"/>
</dbReference>
<dbReference type="GO" id="GO:0098505">
    <property type="term" value="F:G-rich strand telomeric DNA binding"/>
    <property type="evidence" value="ECO:0007669"/>
    <property type="project" value="Ensembl"/>
</dbReference>
<dbReference type="GO" id="GO:0019902">
    <property type="term" value="F:phosphatase binding"/>
    <property type="evidence" value="ECO:0007669"/>
    <property type="project" value="Ensembl"/>
</dbReference>
<dbReference type="GO" id="GO:0042162">
    <property type="term" value="F:telomeric DNA binding"/>
    <property type="evidence" value="ECO:0000314"/>
    <property type="project" value="BHF-UCL"/>
</dbReference>
<dbReference type="GO" id="GO:0035556">
    <property type="term" value="P:intracellular signal transduction"/>
    <property type="evidence" value="ECO:0007669"/>
    <property type="project" value="Ensembl"/>
</dbReference>
<dbReference type="GO" id="GO:0048239">
    <property type="term" value="P:negative regulation of DNA recombination at telomere"/>
    <property type="evidence" value="ECO:0000315"/>
    <property type="project" value="UniProtKB"/>
</dbReference>
<dbReference type="GO" id="GO:0032205">
    <property type="term" value="P:negative regulation of telomere maintenance"/>
    <property type="evidence" value="ECO:0007669"/>
    <property type="project" value="Ensembl"/>
</dbReference>
<dbReference type="GO" id="GO:0043123">
    <property type="term" value="P:positive regulation of canonical NF-kappaB signal transduction"/>
    <property type="evidence" value="ECO:0000314"/>
    <property type="project" value="UniProtKB"/>
</dbReference>
<dbReference type="GO" id="GO:0051092">
    <property type="term" value="P:positive regulation of NF-kappaB transcription factor activity"/>
    <property type="evidence" value="ECO:0000315"/>
    <property type="project" value="UniProtKB"/>
</dbReference>
<dbReference type="GO" id="GO:1901224">
    <property type="term" value="P:positive regulation of non-canonical NF-kappaB signal transduction"/>
    <property type="evidence" value="ECO:0007669"/>
    <property type="project" value="Ensembl"/>
</dbReference>
<dbReference type="GO" id="GO:0032206">
    <property type="term" value="P:positive regulation of telomere maintenance"/>
    <property type="evidence" value="ECO:0000303"/>
    <property type="project" value="ComplexPortal"/>
</dbReference>
<dbReference type="GO" id="GO:0070198">
    <property type="term" value="P:protein localization to chromosome, telomeric region"/>
    <property type="evidence" value="ECO:0007669"/>
    <property type="project" value="Ensembl"/>
</dbReference>
<dbReference type="GO" id="GO:0006355">
    <property type="term" value="P:regulation of DNA-templated transcription"/>
    <property type="evidence" value="ECO:0000315"/>
    <property type="project" value="UniProtKB"/>
</dbReference>
<dbReference type="GO" id="GO:0010569">
    <property type="term" value="P:regulation of double-strand break repair via homologous recombination"/>
    <property type="evidence" value="ECO:0000315"/>
    <property type="project" value="UniProtKB"/>
</dbReference>
<dbReference type="GO" id="GO:0016233">
    <property type="term" value="P:telomere capping"/>
    <property type="evidence" value="ECO:0000266"/>
    <property type="project" value="ComplexPortal"/>
</dbReference>
<dbReference type="GO" id="GO:0010833">
    <property type="term" value="P:telomere maintenance via telomere lengthening"/>
    <property type="evidence" value="ECO:0000315"/>
    <property type="project" value="UniProtKB"/>
</dbReference>
<dbReference type="CDD" id="cd11655">
    <property type="entry name" value="rap1_myb-like"/>
    <property type="match status" value="1"/>
</dbReference>
<dbReference type="FunFam" id="1.10.10.60:FF:000246">
    <property type="entry name" value="Telomeric repeat-binding factor 2-interacting protein 1"/>
    <property type="match status" value="1"/>
</dbReference>
<dbReference type="Gene3D" id="3.40.50.10190">
    <property type="entry name" value="BRCT domain"/>
    <property type="match status" value="1"/>
</dbReference>
<dbReference type="Gene3D" id="1.10.10.60">
    <property type="entry name" value="Homeodomain-like"/>
    <property type="match status" value="1"/>
</dbReference>
<dbReference type="InterPro" id="IPR001357">
    <property type="entry name" value="BRCT_dom"/>
</dbReference>
<dbReference type="InterPro" id="IPR036420">
    <property type="entry name" value="BRCT_dom_sf"/>
</dbReference>
<dbReference type="InterPro" id="IPR009057">
    <property type="entry name" value="Homeodomain-like_sf"/>
</dbReference>
<dbReference type="InterPro" id="IPR021661">
    <property type="entry name" value="Rap1_C"/>
</dbReference>
<dbReference type="InterPro" id="IPR039595">
    <property type="entry name" value="TE2IP/Rap1"/>
</dbReference>
<dbReference type="InterPro" id="IPR015010">
    <property type="entry name" value="TERF2IP_Myb"/>
</dbReference>
<dbReference type="PANTHER" id="PTHR16466">
    <property type="entry name" value="TELOMERE REPEAT-BINDING FACTOR 2-INTERACTING PROTEIN 1"/>
    <property type="match status" value="1"/>
</dbReference>
<dbReference type="PANTHER" id="PTHR16466:SF6">
    <property type="entry name" value="TELOMERIC REPEAT-BINDING FACTOR 2-INTERACTING PROTEIN 1"/>
    <property type="match status" value="1"/>
</dbReference>
<dbReference type="Pfam" id="PF16589">
    <property type="entry name" value="BRCT_2"/>
    <property type="match status" value="1"/>
</dbReference>
<dbReference type="Pfam" id="PF08914">
    <property type="entry name" value="Myb_Rap1"/>
    <property type="match status" value="1"/>
</dbReference>
<dbReference type="Pfam" id="PF11626">
    <property type="entry name" value="Rap1_C"/>
    <property type="match status" value="1"/>
</dbReference>
<dbReference type="SUPFAM" id="SSF46689">
    <property type="entry name" value="Homeodomain-like"/>
    <property type="match status" value="1"/>
</dbReference>
<proteinExistence type="evidence at protein level"/>
<protein>
    <recommendedName>
        <fullName>Telomeric repeat-binding factor 2-interacting protein 1</fullName>
        <shortName>TERF2-interacting telomeric protein 1</shortName>
        <shortName>TRF2-interacting telomeric protein 1</shortName>
    </recommendedName>
    <alternativeName>
        <fullName>Repressor/activator protein 1 homolog</fullName>
        <shortName>RAP1 homolog</shortName>
    </alternativeName>
</protein>